<sequence>MSIQVSGLCKHFGQFTALNNVSIEFPSGGLVALLGPSGCGKTSLLRVIAGLERPDSGTVAIQNRDVSGLDIRERQVGFVFQHYALFRHMTIFENVAFGLRAKPKARRPNEATIKQKVNRLLQLVQLDWLADRYPAQLSGGQRQRVALARALAIEPQVLLLDEPFGALDAKVRKELRRWLRKLHDELHITSLFVTHDQEEALEVADHIVVMNKGQIEQIGTPEEIYRTPRTEFVYQFVGSSNRLYLEDSNGLSFTPSDVVSTHGKQAKRIYCRPHDFAVNTQHRPDAIPVAVARKLALGNMVRLEAYSLDNQQLVEVELSNHDPVLDEIQAKRHLWLTPKTVSQFA</sequence>
<name>CYSA_VIBVU</name>
<accession>Q8D653</accession>
<organism>
    <name type="scientific">Vibrio vulnificus (strain CMCP6)</name>
    <dbReference type="NCBI Taxonomy" id="216895"/>
    <lineage>
        <taxon>Bacteria</taxon>
        <taxon>Pseudomonadati</taxon>
        <taxon>Pseudomonadota</taxon>
        <taxon>Gammaproteobacteria</taxon>
        <taxon>Vibrionales</taxon>
        <taxon>Vibrionaceae</taxon>
        <taxon>Vibrio</taxon>
    </lineage>
</organism>
<dbReference type="EC" id="7.3.2.3" evidence="1"/>
<dbReference type="EMBL" id="AE016796">
    <property type="protein sequence ID" value="AAO07626.1"/>
    <property type="molecule type" value="Genomic_DNA"/>
</dbReference>
<dbReference type="RefSeq" id="WP_011081624.1">
    <property type="nucleotide sequence ID" value="NC_004460.2"/>
</dbReference>
<dbReference type="SMR" id="Q8D653"/>
<dbReference type="KEGG" id="vvu:VV2_0688"/>
<dbReference type="HOGENOM" id="CLU_000604_1_1_6"/>
<dbReference type="Proteomes" id="UP000002275">
    <property type="component" value="Chromosome 2"/>
</dbReference>
<dbReference type="GO" id="GO:0043190">
    <property type="term" value="C:ATP-binding cassette (ABC) transporter complex"/>
    <property type="evidence" value="ECO:0007669"/>
    <property type="project" value="InterPro"/>
</dbReference>
<dbReference type="GO" id="GO:0015419">
    <property type="term" value="F:ABC-type sulfate transporter activity"/>
    <property type="evidence" value="ECO:0007669"/>
    <property type="project" value="InterPro"/>
</dbReference>
<dbReference type="GO" id="GO:0102025">
    <property type="term" value="F:ABC-type thiosulfate transporter activity"/>
    <property type="evidence" value="ECO:0007669"/>
    <property type="project" value="RHEA"/>
</dbReference>
<dbReference type="GO" id="GO:0005524">
    <property type="term" value="F:ATP binding"/>
    <property type="evidence" value="ECO:0007669"/>
    <property type="project" value="UniProtKB-KW"/>
</dbReference>
<dbReference type="GO" id="GO:0016887">
    <property type="term" value="F:ATP hydrolysis activity"/>
    <property type="evidence" value="ECO:0007669"/>
    <property type="project" value="InterPro"/>
</dbReference>
<dbReference type="CDD" id="cd03296">
    <property type="entry name" value="ABC_CysA_sulfate_importer"/>
    <property type="match status" value="1"/>
</dbReference>
<dbReference type="FunFam" id="3.40.50.300:FF:000227">
    <property type="entry name" value="Sulfate/thiosulfate import ATP-binding protein CysA"/>
    <property type="match status" value="1"/>
</dbReference>
<dbReference type="Gene3D" id="3.40.50.300">
    <property type="entry name" value="P-loop containing nucleotide triphosphate hydrolases"/>
    <property type="match status" value="1"/>
</dbReference>
<dbReference type="InterPro" id="IPR003593">
    <property type="entry name" value="AAA+_ATPase"/>
</dbReference>
<dbReference type="InterPro" id="IPR050093">
    <property type="entry name" value="ABC_SmlMolc_Importer"/>
</dbReference>
<dbReference type="InterPro" id="IPR003439">
    <property type="entry name" value="ABC_transporter-like_ATP-bd"/>
</dbReference>
<dbReference type="InterPro" id="IPR017871">
    <property type="entry name" value="ABC_transporter-like_CS"/>
</dbReference>
<dbReference type="InterPro" id="IPR027417">
    <property type="entry name" value="P-loop_NTPase"/>
</dbReference>
<dbReference type="InterPro" id="IPR005666">
    <property type="entry name" value="Sulph_transpt1"/>
</dbReference>
<dbReference type="InterPro" id="IPR024765">
    <property type="entry name" value="TOBE-like"/>
</dbReference>
<dbReference type="NCBIfam" id="TIGR00968">
    <property type="entry name" value="3a0106s01"/>
    <property type="match status" value="1"/>
</dbReference>
<dbReference type="PANTHER" id="PTHR42781">
    <property type="entry name" value="SPERMIDINE/PUTRESCINE IMPORT ATP-BINDING PROTEIN POTA"/>
    <property type="match status" value="1"/>
</dbReference>
<dbReference type="PANTHER" id="PTHR42781:SF4">
    <property type="entry name" value="SPERMIDINE_PUTRESCINE IMPORT ATP-BINDING PROTEIN POTA"/>
    <property type="match status" value="1"/>
</dbReference>
<dbReference type="Pfam" id="PF00005">
    <property type="entry name" value="ABC_tran"/>
    <property type="match status" value="1"/>
</dbReference>
<dbReference type="Pfam" id="PF12857">
    <property type="entry name" value="TOBE_3"/>
    <property type="match status" value="1"/>
</dbReference>
<dbReference type="SMART" id="SM00382">
    <property type="entry name" value="AAA"/>
    <property type="match status" value="1"/>
</dbReference>
<dbReference type="SUPFAM" id="SSF52540">
    <property type="entry name" value="P-loop containing nucleoside triphosphate hydrolases"/>
    <property type="match status" value="1"/>
</dbReference>
<dbReference type="PROSITE" id="PS00211">
    <property type="entry name" value="ABC_TRANSPORTER_1"/>
    <property type="match status" value="1"/>
</dbReference>
<dbReference type="PROSITE" id="PS50893">
    <property type="entry name" value="ABC_TRANSPORTER_2"/>
    <property type="match status" value="1"/>
</dbReference>
<dbReference type="PROSITE" id="PS51237">
    <property type="entry name" value="CYSA"/>
    <property type="match status" value="1"/>
</dbReference>
<comment type="function">
    <text evidence="1">Part of the ABC transporter complex CysAWTP involved in sulfate/thiosulfate import. Responsible for energy coupling to the transport system.</text>
</comment>
<comment type="catalytic activity">
    <reaction evidence="1">
        <text>sulfate(out) + ATP + H2O = sulfate(in) + ADP + phosphate + H(+)</text>
        <dbReference type="Rhea" id="RHEA:10192"/>
        <dbReference type="ChEBI" id="CHEBI:15377"/>
        <dbReference type="ChEBI" id="CHEBI:15378"/>
        <dbReference type="ChEBI" id="CHEBI:16189"/>
        <dbReference type="ChEBI" id="CHEBI:30616"/>
        <dbReference type="ChEBI" id="CHEBI:43474"/>
        <dbReference type="ChEBI" id="CHEBI:456216"/>
        <dbReference type="EC" id="7.3.2.3"/>
    </reaction>
</comment>
<comment type="catalytic activity">
    <reaction evidence="1">
        <text>thiosulfate(out) + ATP + H2O = thiosulfate(in) + ADP + phosphate + H(+)</text>
        <dbReference type="Rhea" id="RHEA:29871"/>
        <dbReference type="ChEBI" id="CHEBI:15377"/>
        <dbReference type="ChEBI" id="CHEBI:15378"/>
        <dbReference type="ChEBI" id="CHEBI:30616"/>
        <dbReference type="ChEBI" id="CHEBI:33542"/>
        <dbReference type="ChEBI" id="CHEBI:43474"/>
        <dbReference type="ChEBI" id="CHEBI:456216"/>
        <dbReference type="EC" id="7.3.2.3"/>
    </reaction>
</comment>
<comment type="subunit">
    <text evidence="1">The complex is composed of two ATP-binding proteins (CysA), two transmembrane proteins (CysT and CysW) and a solute-binding protein (CysP).</text>
</comment>
<comment type="subcellular location">
    <subcellularLocation>
        <location evidence="1">Cell inner membrane</location>
        <topology evidence="1">Peripheral membrane protein</topology>
    </subcellularLocation>
</comment>
<comment type="similarity">
    <text evidence="1">Belongs to the ABC transporter superfamily. Sulfate/tungstate importer (TC 3.A.1.6) family.</text>
</comment>
<protein>
    <recommendedName>
        <fullName evidence="1">Sulfate/thiosulfate import ATP-binding protein CysA</fullName>
        <ecNumber evidence="1">7.3.2.3</ecNumber>
    </recommendedName>
    <alternativeName>
        <fullName evidence="1">Sulfate-transporting ATPase</fullName>
    </alternativeName>
</protein>
<feature type="chain" id="PRO_0000092299" description="Sulfate/thiosulfate import ATP-binding protein CysA">
    <location>
        <begin position="1"/>
        <end position="345"/>
    </location>
</feature>
<feature type="domain" description="ABC transporter" evidence="1">
    <location>
        <begin position="3"/>
        <end position="237"/>
    </location>
</feature>
<feature type="binding site" evidence="1">
    <location>
        <begin position="35"/>
        <end position="42"/>
    </location>
    <ligand>
        <name>ATP</name>
        <dbReference type="ChEBI" id="CHEBI:30616"/>
    </ligand>
</feature>
<gene>
    <name evidence="1" type="primary">cysA</name>
    <name type="ordered locus">VV2_0688</name>
</gene>
<reference key="1">
    <citation type="submission" date="2002-12" db="EMBL/GenBank/DDBJ databases">
        <title>Complete genome sequence of Vibrio vulnificus CMCP6.</title>
        <authorList>
            <person name="Rhee J.H."/>
            <person name="Kim S.Y."/>
            <person name="Chung S.S."/>
            <person name="Kim J.J."/>
            <person name="Moon Y.H."/>
            <person name="Jeong H."/>
            <person name="Choy H.E."/>
        </authorList>
    </citation>
    <scope>NUCLEOTIDE SEQUENCE [LARGE SCALE GENOMIC DNA]</scope>
    <source>
        <strain>CMCP6</strain>
    </source>
</reference>
<proteinExistence type="inferred from homology"/>
<keyword id="KW-0067">ATP-binding</keyword>
<keyword id="KW-0997">Cell inner membrane</keyword>
<keyword id="KW-1003">Cell membrane</keyword>
<keyword id="KW-0472">Membrane</keyword>
<keyword id="KW-0547">Nucleotide-binding</keyword>
<keyword id="KW-0764">Sulfate transport</keyword>
<keyword id="KW-1278">Translocase</keyword>
<keyword id="KW-0813">Transport</keyword>
<evidence type="ECO:0000255" key="1">
    <source>
        <dbReference type="HAMAP-Rule" id="MF_01701"/>
    </source>
</evidence>